<reference key="1">
    <citation type="journal article" date="2007" name="Mol. Biol. Evol.">
        <title>The complete chloroplast and mitochondrial DNA sequence of Ostreococcus tauri: organelle genomes of the smallest eukaryote are examples of compaction.</title>
        <authorList>
            <person name="Robbens S."/>
            <person name="Derelle E."/>
            <person name="Ferraz C."/>
            <person name="Wuyts J."/>
            <person name="Moreau H."/>
            <person name="Van de Peer Y."/>
        </authorList>
    </citation>
    <scope>NUCLEOTIDE SEQUENCE [LARGE SCALE GENOMIC DNA]</scope>
    <source>
        <strain>OTTH0595</strain>
    </source>
</reference>
<geneLocation type="chloroplast"/>
<name>ATPB_OSTTA</name>
<protein>
    <recommendedName>
        <fullName evidence="1">ATP synthase subunit beta, chloroplastic</fullName>
        <ecNumber evidence="1">7.1.2.2</ecNumber>
    </recommendedName>
    <alternativeName>
        <fullName evidence="1">ATP synthase F1 sector subunit beta</fullName>
    </alternativeName>
    <alternativeName>
        <fullName evidence="1">F-ATPase subunit beta</fullName>
    </alternativeName>
</protein>
<sequence>MTALKTEQNIGRITQIIGPVIDAVFSPNKMPNIYNSVVIEGKNDVGDTIKCVAEVQQLLGDNVVRAVSMSATDGLMRGMTVVDTGAALSVPVGKNTLGRIFNVLGEPVDELGAVSTPEGMLPIHRAAPAFVDLDTNLSIFETGIKVVDLLAPYRRGGKIGLFGGAGVGKTVLIMELIVNNNIAKAHGGVSVFAGVGERTREGNDLYQEMCESKVIDTANLANSKVALVYGQMNEPPGARMRVGLTALTMAEYFRDVNNQDVLLFVDNIFRFVQAGSEVSALLGRMPSAVGYQPTLSTEMGSLQERITSTKTGSITSIQAVYVPADDLTDPAPATTFAHLDATTVLSRNLAAKGIYPAVDPLDSTSTMLQPWILGDDHYDTAQGVKQTLQRYKELQDIIAILGLDELSEEDRLTVARARKVERFLSQPFFVAEVFTGSPGKYVSLAESIQGFKMILGGELDDLPEQAFYLVGNIDEAVEKAAKL</sequence>
<keyword id="KW-0066">ATP synthesis</keyword>
<keyword id="KW-0067">ATP-binding</keyword>
<keyword id="KW-0139">CF(1)</keyword>
<keyword id="KW-0150">Chloroplast</keyword>
<keyword id="KW-0375">Hydrogen ion transport</keyword>
<keyword id="KW-0406">Ion transport</keyword>
<keyword id="KW-0472">Membrane</keyword>
<keyword id="KW-0547">Nucleotide-binding</keyword>
<keyword id="KW-0934">Plastid</keyword>
<keyword id="KW-1185">Reference proteome</keyword>
<keyword id="KW-0793">Thylakoid</keyword>
<keyword id="KW-1278">Translocase</keyword>
<keyword id="KW-0813">Transport</keyword>
<evidence type="ECO:0000255" key="1">
    <source>
        <dbReference type="HAMAP-Rule" id="MF_01347"/>
    </source>
</evidence>
<organism>
    <name type="scientific">Ostreococcus tauri</name>
    <dbReference type="NCBI Taxonomy" id="70448"/>
    <lineage>
        <taxon>Eukaryota</taxon>
        <taxon>Viridiplantae</taxon>
        <taxon>Chlorophyta</taxon>
        <taxon>Mamiellophyceae</taxon>
        <taxon>Mamiellales</taxon>
        <taxon>Bathycoccaceae</taxon>
        <taxon>Ostreococcus</taxon>
    </lineage>
</organism>
<dbReference type="EC" id="7.1.2.2" evidence="1"/>
<dbReference type="EMBL" id="CR954199">
    <property type="protein sequence ID" value="CAL36335.1"/>
    <property type="molecule type" value="Genomic_DNA"/>
</dbReference>
<dbReference type="RefSeq" id="YP_717213.1">
    <property type="nucleotide sequence ID" value="NC_008289.1"/>
</dbReference>
<dbReference type="SMR" id="Q0P3P2"/>
<dbReference type="FunCoup" id="Q0P3P2">
    <property type="interactions" value="218"/>
</dbReference>
<dbReference type="STRING" id="70448.Q0P3P2"/>
<dbReference type="GeneID" id="4238808"/>
<dbReference type="KEGG" id="ota:OstapCp10"/>
<dbReference type="eggNOG" id="KOG1350">
    <property type="taxonomic scope" value="Eukaryota"/>
</dbReference>
<dbReference type="InParanoid" id="Q0P3P2"/>
<dbReference type="Proteomes" id="UP000009170">
    <property type="component" value="Chloroplast"/>
</dbReference>
<dbReference type="GO" id="GO:0009535">
    <property type="term" value="C:chloroplast thylakoid membrane"/>
    <property type="evidence" value="ECO:0007669"/>
    <property type="project" value="UniProtKB-SubCell"/>
</dbReference>
<dbReference type="GO" id="GO:0005739">
    <property type="term" value="C:mitochondrion"/>
    <property type="evidence" value="ECO:0007669"/>
    <property type="project" value="GOC"/>
</dbReference>
<dbReference type="GO" id="GO:0045259">
    <property type="term" value="C:proton-transporting ATP synthase complex"/>
    <property type="evidence" value="ECO:0007669"/>
    <property type="project" value="UniProtKB-KW"/>
</dbReference>
<dbReference type="GO" id="GO:0005524">
    <property type="term" value="F:ATP binding"/>
    <property type="evidence" value="ECO:0007669"/>
    <property type="project" value="UniProtKB-UniRule"/>
</dbReference>
<dbReference type="GO" id="GO:0016887">
    <property type="term" value="F:ATP hydrolysis activity"/>
    <property type="evidence" value="ECO:0007669"/>
    <property type="project" value="InterPro"/>
</dbReference>
<dbReference type="GO" id="GO:0046933">
    <property type="term" value="F:proton-transporting ATP synthase activity, rotational mechanism"/>
    <property type="evidence" value="ECO:0007669"/>
    <property type="project" value="UniProtKB-UniRule"/>
</dbReference>
<dbReference type="GO" id="GO:0042776">
    <property type="term" value="P:proton motive force-driven mitochondrial ATP synthesis"/>
    <property type="evidence" value="ECO:0007669"/>
    <property type="project" value="TreeGrafter"/>
</dbReference>
<dbReference type="CDD" id="cd18110">
    <property type="entry name" value="ATP-synt_F1_beta_C"/>
    <property type="match status" value="1"/>
</dbReference>
<dbReference type="CDD" id="cd18115">
    <property type="entry name" value="ATP-synt_F1_beta_N"/>
    <property type="match status" value="1"/>
</dbReference>
<dbReference type="CDD" id="cd01133">
    <property type="entry name" value="F1-ATPase_beta_CD"/>
    <property type="match status" value="1"/>
</dbReference>
<dbReference type="FunFam" id="1.10.1140.10:FF:000001">
    <property type="entry name" value="ATP synthase subunit beta"/>
    <property type="match status" value="1"/>
</dbReference>
<dbReference type="FunFam" id="3.40.50.12240:FF:000006">
    <property type="entry name" value="ATP synthase subunit beta"/>
    <property type="match status" value="1"/>
</dbReference>
<dbReference type="FunFam" id="3.40.50.300:FF:000004">
    <property type="entry name" value="ATP synthase subunit beta"/>
    <property type="match status" value="1"/>
</dbReference>
<dbReference type="FunFam" id="2.40.10.170:FF:000002">
    <property type="entry name" value="ATP synthase subunit beta, chloroplastic"/>
    <property type="match status" value="1"/>
</dbReference>
<dbReference type="Gene3D" id="2.40.10.170">
    <property type="match status" value="1"/>
</dbReference>
<dbReference type="Gene3D" id="1.10.1140.10">
    <property type="entry name" value="Bovine Mitochondrial F1-atpase, Atp Synthase Beta Chain, Chain D, domain 3"/>
    <property type="match status" value="1"/>
</dbReference>
<dbReference type="Gene3D" id="3.40.50.300">
    <property type="entry name" value="P-loop containing nucleotide triphosphate hydrolases"/>
    <property type="match status" value="1"/>
</dbReference>
<dbReference type="HAMAP" id="MF_01347">
    <property type="entry name" value="ATP_synth_beta_bact"/>
    <property type="match status" value="1"/>
</dbReference>
<dbReference type="InterPro" id="IPR003593">
    <property type="entry name" value="AAA+_ATPase"/>
</dbReference>
<dbReference type="InterPro" id="IPR055190">
    <property type="entry name" value="ATP-synt_VA_C"/>
</dbReference>
<dbReference type="InterPro" id="IPR005722">
    <property type="entry name" value="ATP_synth_F1_bsu"/>
</dbReference>
<dbReference type="InterPro" id="IPR020003">
    <property type="entry name" value="ATPase_a/bsu_AS"/>
</dbReference>
<dbReference type="InterPro" id="IPR050053">
    <property type="entry name" value="ATPase_alpha/beta_chains"/>
</dbReference>
<dbReference type="InterPro" id="IPR004100">
    <property type="entry name" value="ATPase_F1/V1/A1_a/bsu_N"/>
</dbReference>
<dbReference type="InterPro" id="IPR036121">
    <property type="entry name" value="ATPase_F1/V1/A1_a/bsu_N_sf"/>
</dbReference>
<dbReference type="InterPro" id="IPR000194">
    <property type="entry name" value="ATPase_F1/V1/A1_a/bsu_nucl-bd"/>
</dbReference>
<dbReference type="InterPro" id="IPR024034">
    <property type="entry name" value="ATPase_F1/V1_b/a_C"/>
</dbReference>
<dbReference type="InterPro" id="IPR027417">
    <property type="entry name" value="P-loop_NTPase"/>
</dbReference>
<dbReference type="NCBIfam" id="TIGR01039">
    <property type="entry name" value="atpD"/>
    <property type="match status" value="1"/>
</dbReference>
<dbReference type="PANTHER" id="PTHR15184">
    <property type="entry name" value="ATP SYNTHASE"/>
    <property type="match status" value="1"/>
</dbReference>
<dbReference type="PANTHER" id="PTHR15184:SF71">
    <property type="entry name" value="ATP SYNTHASE SUBUNIT BETA, MITOCHONDRIAL"/>
    <property type="match status" value="1"/>
</dbReference>
<dbReference type="Pfam" id="PF00006">
    <property type="entry name" value="ATP-synt_ab"/>
    <property type="match status" value="1"/>
</dbReference>
<dbReference type="Pfam" id="PF02874">
    <property type="entry name" value="ATP-synt_ab_N"/>
    <property type="match status" value="1"/>
</dbReference>
<dbReference type="Pfam" id="PF22919">
    <property type="entry name" value="ATP-synt_VA_C"/>
    <property type="match status" value="1"/>
</dbReference>
<dbReference type="SMART" id="SM00382">
    <property type="entry name" value="AAA"/>
    <property type="match status" value="1"/>
</dbReference>
<dbReference type="SUPFAM" id="SSF47917">
    <property type="entry name" value="C-terminal domain of alpha and beta subunits of F1 ATP synthase"/>
    <property type="match status" value="1"/>
</dbReference>
<dbReference type="SUPFAM" id="SSF50615">
    <property type="entry name" value="N-terminal domain of alpha and beta subunits of F1 ATP synthase"/>
    <property type="match status" value="1"/>
</dbReference>
<dbReference type="SUPFAM" id="SSF52540">
    <property type="entry name" value="P-loop containing nucleoside triphosphate hydrolases"/>
    <property type="match status" value="1"/>
</dbReference>
<dbReference type="PROSITE" id="PS00152">
    <property type="entry name" value="ATPASE_ALPHA_BETA"/>
    <property type="match status" value="1"/>
</dbReference>
<gene>
    <name evidence="1" type="primary">atpB</name>
    <name type="ordered locus">OtCpg00100</name>
</gene>
<feature type="chain" id="PRO_0000254506" description="ATP synthase subunit beta, chloroplastic">
    <location>
        <begin position="1"/>
        <end position="483"/>
    </location>
</feature>
<feature type="binding site" evidence="1">
    <location>
        <begin position="163"/>
        <end position="170"/>
    </location>
    <ligand>
        <name>ATP</name>
        <dbReference type="ChEBI" id="CHEBI:30616"/>
    </ligand>
</feature>
<comment type="function">
    <text evidence="1">Produces ATP from ADP in the presence of a proton gradient across the membrane. The catalytic sites are hosted primarily by the beta subunits.</text>
</comment>
<comment type="catalytic activity">
    <reaction evidence="1">
        <text>ATP + H2O + 4 H(+)(in) = ADP + phosphate + 5 H(+)(out)</text>
        <dbReference type="Rhea" id="RHEA:57720"/>
        <dbReference type="ChEBI" id="CHEBI:15377"/>
        <dbReference type="ChEBI" id="CHEBI:15378"/>
        <dbReference type="ChEBI" id="CHEBI:30616"/>
        <dbReference type="ChEBI" id="CHEBI:43474"/>
        <dbReference type="ChEBI" id="CHEBI:456216"/>
        <dbReference type="EC" id="7.1.2.2"/>
    </reaction>
</comment>
<comment type="subunit">
    <text evidence="1">F-type ATPases have 2 components, CF(1) - the catalytic core - and CF(0) - the membrane proton channel. CF(1) has five subunits: alpha(3), beta(3), gamma(1), delta(1), epsilon(1). CF(0) has four main subunits: a(1), b(1), b'(1) and c(9-12).</text>
</comment>
<comment type="subcellular location">
    <subcellularLocation>
        <location evidence="1">Plastid</location>
        <location evidence="1">Chloroplast thylakoid membrane</location>
        <topology evidence="1">Peripheral membrane protein</topology>
    </subcellularLocation>
</comment>
<comment type="similarity">
    <text evidence="1">Belongs to the ATPase alpha/beta chains family.</text>
</comment>
<proteinExistence type="inferred from homology"/>
<accession>Q0P3P2</accession>